<name>RS17E_HALWD</name>
<proteinExistence type="inferred from homology"/>
<comment type="similarity">
    <text evidence="1">Belongs to the eukaryotic ribosomal protein eS17 family.</text>
</comment>
<feature type="chain" id="PRO_0000258599" description="Small ribosomal subunit protein eS17">
    <location>
        <begin position="1"/>
        <end position="67"/>
    </location>
</feature>
<organism>
    <name type="scientific">Haloquadratum walsbyi (strain DSM 16790 / HBSQ001)</name>
    <dbReference type="NCBI Taxonomy" id="362976"/>
    <lineage>
        <taxon>Archaea</taxon>
        <taxon>Methanobacteriati</taxon>
        <taxon>Methanobacteriota</taxon>
        <taxon>Stenosarchaea group</taxon>
        <taxon>Halobacteria</taxon>
        <taxon>Halobacteriales</taxon>
        <taxon>Haloferacaceae</taxon>
        <taxon>Haloquadratum</taxon>
    </lineage>
</organism>
<gene>
    <name evidence="1" type="primary">rps17e</name>
    <name type="ordered locus">HQ_3016A</name>
</gene>
<protein>
    <recommendedName>
        <fullName evidence="1">Small ribosomal subunit protein eS17</fullName>
    </recommendedName>
    <alternativeName>
        <fullName evidence="2">30S ribosomal protein S17e</fullName>
    </alternativeName>
</protein>
<accession>Q18FY6</accession>
<reference key="1">
    <citation type="journal article" date="2006" name="BMC Genomics">
        <title>The genome of the square archaeon Haloquadratum walsbyi: life at the limits of water activity.</title>
        <authorList>
            <person name="Bolhuis H."/>
            <person name="Palm P."/>
            <person name="Wende A."/>
            <person name="Falb M."/>
            <person name="Rampp M."/>
            <person name="Rodriguez-Valera F."/>
            <person name="Pfeiffer F."/>
            <person name="Oesterhelt D."/>
        </authorList>
    </citation>
    <scope>NUCLEOTIDE SEQUENCE [LARGE SCALE GENOMIC DNA]</scope>
    <source>
        <strain>DSM 16790 / HBSQ001</strain>
    </source>
</reference>
<dbReference type="EMBL" id="AM180088">
    <property type="protein sequence ID" value="CAJ53118.1"/>
    <property type="molecule type" value="Genomic_DNA"/>
</dbReference>
<dbReference type="RefSeq" id="WP_011572225.1">
    <property type="nucleotide sequence ID" value="NC_008212.1"/>
</dbReference>
<dbReference type="SMR" id="Q18FY6"/>
<dbReference type="STRING" id="362976.HQ_3016A"/>
<dbReference type="GeneID" id="4194653"/>
<dbReference type="KEGG" id="hwa:HQ_3016A"/>
<dbReference type="eggNOG" id="arCOG01885">
    <property type="taxonomic scope" value="Archaea"/>
</dbReference>
<dbReference type="HOGENOM" id="CLU_176720_1_0_2"/>
<dbReference type="Proteomes" id="UP000001975">
    <property type="component" value="Chromosome"/>
</dbReference>
<dbReference type="GO" id="GO:0005829">
    <property type="term" value="C:cytosol"/>
    <property type="evidence" value="ECO:0007669"/>
    <property type="project" value="UniProtKB-ARBA"/>
</dbReference>
<dbReference type="GO" id="GO:1990904">
    <property type="term" value="C:ribonucleoprotein complex"/>
    <property type="evidence" value="ECO:0007669"/>
    <property type="project" value="UniProtKB-KW"/>
</dbReference>
<dbReference type="GO" id="GO:0005840">
    <property type="term" value="C:ribosome"/>
    <property type="evidence" value="ECO:0007669"/>
    <property type="project" value="UniProtKB-KW"/>
</dbReference>
<dbReference type="GO" id="GO:0003735">
    <property type="term" value="F:structural constituent of ribosome"/>
    <property type="evidence" value="ECO:0007669"/>
    <property type="project" value="InterPro"/>
</dbReference>
<dbReference type="GO" id="GO:0006412">
    <property type="term" value="P:translation"/>
    <property type="evidence" value="ECO:0007669"/>
    <property type="project" value="UniProtKB-UniRule"/>
</dbReference>
<dbReference type="Gene3D" id="1.10.60.20">
    <property type="entry name" value="Ribosomal protein S17e-like"/>
    <property type="match status" value="1"/>
</dbReference>
<dbReference type="HAMAP" id="MF_00511">
    <property type="entry name" value="Ribosomal_eS17"/>
    <property type="match status" value="1"/>
</dbReference>
<dbReference type="InterPro" id="IPR001210">
    <property type="entry name" value="Ribosomal_eS17"/>
</dbReference>
<dbReference type="InterPro" id="IPR018273">
    <property type="entry name" value="Ribosomal_eS17_CS"/>
</dbReference>
<dbReference type="InterPro" id="IPR036401">
    <property type="entry name" value="Ribosomal_eS17_sf"/>
</dbReference>
<dbReference type="NCBIfam" id="NF002242">
    <property type="entry name" value="PRK01151.1"/>
    <property type="match status" value="1"/>
</dbReference>
<dbReference type="PANTHER" id="PTHR10732">
    <property type="entry name" value="40S RIBOSOMAL PROTEIN S17"/>
    <property type="match status" value="1"/>
</dbReference>
<dbReference type="PANTHER" id="PTHR10732:SF0">
    <property type="entry name" value="40S RIBOSOMAL PROTEIN S17"/>
    <property type="match status" value="1"/>
</dbReference>
<dbReference type="Pfam" id="PF00833">
    <property type="entry name" value="Ribosomal_S17e"/>
    <property type="match status" value="1"/>
</dbReference>
<dbReference type="SUPFAM" id="SSF116820">
    <property type="entry name" value="Rps17e-like"/>
    <property type="match status" value="1"/>
</dbReference>
<dbReference type="PROSITE" id="PS00712">
    <property type="entry name" value="RIBOSOMAL_S17E"/>
    <property type="match status" value="1"/>
</dbReference>
<evidence type="ECO:0000255" key="1">
    <source>
        <dbReference type="HAMAP-Rule" id="MF_00511"/>
    </source>
</evidence>
<evidence type="ECO:0000305" key="2"/>
<sequence length="67" mass="7432">MAIKPKYVKQLGTLLLEEYPQAFNTDFETNKESVETLTNVESKGVRNRIAGYITRKKGSNTPPSASA</sequence>
<keyword id="KW-1185">Reference proteome</keyword>
<keyword id="KW-0687">Ribonucleoprotein</keyword>
<keyword id="KW-0689">Ribosomal protein</keyword>